<proteinExistence type="inferred from homology"/>
<dbReference type="EMBL" id="CP000553">
    <property type="protein sequence ID" value="ABM76542.1"/>
    <property type="molecule type" value="Genomic_DNA"/>
</dbReference>
<dbReference type="RefSeq" id="WP_011824504.1">
    <property type="nucleotide sequence ID" value="NC_008819.1"/>
</dbReference>
<dbReference type="SMR" id="A2C4Y2"/>
<dbReference type="KEGG" id="pme:NATL1_19861"/>
<dbReference type="eggNOG" id="COG0200">
    <property type="taxonomic scope" value="Bacteria"/>
</dbReference>
<dbReference type="HOGENOM" id="CLU_055188_4_1_3"/>
<dbReference type="Proteomes" id="UP000002592">
    <property type="component" value="Chromosome"/>
</dbReference>
<dbReference type="GO" id="GO:0022625">
    <property type="term" value="C:cytosolic large ribosomal subunit"/>
    <property type="evidence" value="ECO:0007669"/>
    <property type="project" value="TreeGrafter"/>
</dbReference>
<dbReference type="GO" id="GO:0019843">
    <property type="term" value="F:rRNA binding"/>
    <property type="evidence" value="ECO:0007669"/>
    <property type="project" value="UniProtKB-UniRule"/>
</dbReference>
<dbReference type="GO" id="GO:0003735">
    <property type="term" value="F:structural constituent of ribosome"/>
    <property type="evidence" value="ECO:0007669"/>
    <property type="project" value="InterPro"/>
</dbReference>
<dbReference type="GO" id="GO:0006412">
    <property type="term" value="P:translation"/>
    <property type="evidence" value="ECO:0007669"/>
    <property type="project" value="UniProtKB-UniRule"/>
</dbReference>
<dbReference type="Gene3D" id="3.100.10.10">
    <property type="match status" value="1"/>
</dbReference>
<dbReference type="HAMAP" id="MF_01341">
    <property type="entry name" value="Ribosomal_uL15"/>
    <property type="match status" value="1"/>
</dbReference>
<dbReference type="InterPro" id="IPR030878">
    <property type="entry name" value="Ribosomal_uL15"/>
</dbReference>
<dbReference type="InterPro" id="IPR021131">
    <property type="entry name" value="Ribosomal_uL15/eL18"/>
</dbReference>
<dbReference type="InterPro" id="IPR036227">
    <property type="entry name" value="Ribosomal_uL15/eL18_sf"/>
</dbReference>
<dbReference type="InterPro" id="IPR005749">
    <property type="entry name" value="Ribosomal_uL15_bac-type"/>
</dbReference>
<dbReference type="InterPro" id="IPR001196">
    <property type="entry name" value="Ribosomal_uL15_CS"/>
</dbReference>
<dbReference type="NCBIfam" id="TIGR01071">
    <property type="entry name" value="rplO_bact"/>
    <property type="match status" value="1"/>
</dbReference>
<dbReference type="PANTHER" id="PTHR12934">
    <property type="entry name" value="50S RIBOSOMAL PROTEIN L15"/>
    <property type="match status" value="1"/>
</dbReference>
<dbReference type="PANTHER" id="PTHR12934:SF11">
    <property type="entry name" value="LARGE RIBOSOMAL SUBUNIT PROTEIN UL15M"/>
    <property type="match status" value="1"/>
</dbReference>
<dbReference type="Pfam" id="PF00828">
    <property type="entry name" value="Ribosomal_L27A"/>
    <property type="match status" value="1"/>
</dbReference>
<dbReference type="SUPFAM" id="SSF52080">
    <property type="entry name" value="Ribosomal proteins L15p and L18e"/>
    <property type="match status" value="1"/>
</dbReference>
<dbReference type="PROSITE" id="PS00475">
    <property type="entry name" value="RIBOSOMAL_L15"/>
    <property type="match status" value="1"/>
</dbReference>
<protein>
    <recommendedName>
        <fullName evidence="1">Large ribosomal subunit protein uL15</fullName>
    </recommendedName>
    <alternativeName>
        <fullName evidence="3">50S ribosomal protein L15</fullName>
    </alternativeName>
</protein>
<evidence type="ECO:0000255" key="1">
    <source>
        <dbReference type="HAMAP-Rule" id="MF_01341"/>
    </source>
</evidence>
<evidence type="ECO:0000256" key="2">
    <source>
        <dbReference type="SAM" id="MobiDB-lite"/>
    </source>
</evidence>
<evidence type="ECO:0000305" key="3"/>
<gene>
    <name evidence="1" type="primary">rplO</name>
    <name type="ordered locus">NATL1_19861</name>
</gene>
<name>RL15_PROM1</name>
<reference key="1">
    <citation type="journal article" date="2007" name="PLoS Genet.">
        <title>Patterns and implications of gene gain and loss in the evolution of Prochlorococcus.</title>
        <authorList>
            <person name="Kettler G.C."/>
            <person name="Martiny A.C."/>
            <person name="Huang K."/>
            <person name="Zucker J."/>
            <person name="Coleman M.L."/>
            <person name="Rodrigue S."/>
            <person name="Chen F."/>
            <person name="Lapidus A."/>
            <person name="Ferriera S."/>
            <person name="Johnson J."/>
            <person name="Steglich C."/>
            <person name="Church G.M."/>
            <person name="Richardson P."/>
            <person name="Chisholm S.W."/>
        </authorList>
    </citation>
    <scope>NUCLEOTIDE SEQUENCE [LARGE SCALE GENOMIC DNA]</scope>
    <source>
        <strain>NATL1A</strain>
    </source>
</reference>
<comment type="function">
    <text evidence="1">Binds to the 23S rRNA.</text>
</comment>
<comment type="subunit">
    <text evidence="1">Part of the 50S ribosomal subunit.</text>
</comment>
<comment type="similarity">
    <text evidence="1">Belongs to the universal ribosomal protein uL15 family.</text>
</comment>
<sequence length="150" mass="16350">MTIKLESLQSNKGSRRKKMRKGRGIAAGQGASCGFGMRGQKSRSGRPTRPGFEGGQMPLYRRVPKLKHFPIVNQKNFTVLNVSRLNALKDGTIVNLDLLVKEGILTKPKNPLKILGNGNLEVKLTVQAAAFTASAKKKIEEVGGSCELYN</sequence>
<feature type="chain" id="PRO_1000054513" description="Large ribosomal subunit protein uL15">
    <location>
        <begin position="1"/>
        <end position="150"/>
    </location>
</feature>
<feature type="region of interest" description="Disordered" evidence="2">
    <location>
        <begin position="1"/>
        <end position="57"/>
    </location>
</feature>
<feature type="compositionally biased region" description="Basic residues" evidence="2">
    <location>
        <begin position="13"/>
        <end position="23"/>
    </location>
</feature>
<feature type="compositionally biased region" description="Gly residues" evidence="2">
    <location>
        <begin position="25"/>
        <end position="37"/>
    </location>
</feature>
<organism>
    <name type="scientific">Prochlorococcus marinus (strain NATL1A)</name>
    <dbReference type="NCBI Taxonomy" id="167555"/>
    <lineage>
        <taxon>Bacteria</taxon>
        <taxon>Bacillati</taxon>
        <taxon>Cyanobacteriota</taxon>
        <taxon>Cyanophyceae</taxon>
        <taxon>Synechococcales</taxon>
        <taxon>Prochlorococcaceae</taxon>
        <taxon>Prochlorococcus</taxon>
    </lineage>
</organism>
<accession>A2C4Y2</accession>
<keyword id="KW-0687">Ribonucleoprotein</keyword>
<keyword id="KW-0689">Ribosomal protein</keyword>
<keyword id="KW-0694">RNA-binding</keyword>
<keyword id="KW-0699">rRNA-binding</keyword>